<name>WAAJ_ECOLX</name>
<dbReference type="EC" id="2.4.1.58" evidence="3 4"/>
<dbReference type="EMBL" id="AF019745">
    <property type="protein sequence ID" value="AAC69663.2"/>
    <property type="molecule type" value="Genomic_DNA"/>
</dbReference>
<dbReference type="SMR" id="Q9ZIT6"/>
<dbReference type="CAZy" id="GT8">
    <property type="family name" value="Glycosyltransferase Family 8"/>
</dbReference>
<dbReference type="UniPathway" id="UPA00958"/>
<dbReference type="GO" id="GO:0005886">
    <property type="term" value="C:plasma membrane"/>
    <property type="evidence" value="ECO:0007669"/>
    <property type="project" value="UniProtKB-SubCell"/>
</dbReference>
<dbReference type="GO" id="GO:0008918">
    <property type="term" value="F:lipopolysaccharide 3-alpha-galactosyltransferase activity"/>
    <property type="evidence" value="ECO:0007669"/>
    <property type="project" value="InterPro"/>
</dbReference>
<dbReference type="GO" id="GO:0046872">
    <property type="term" value="F:metal ion binding"/>
    <property type="evidence" value="ECO:0007669"/>
    <property type="project" value="UniProtKB-KW"/>
</dbReference>
<dbReference type="GO" id="GO:0009244">
    <property type="term" value="P:lipopolysaccharide core region biosynthetic process"/>
    <property type="evidence" value="ECO:0007669"/>
    <property type="project" value="UniProtKB-UniPathway"/>
</dbReference>
<dbReference type="CDD" id="cd04194">
    <property type="entry name" value="GT8_A4GalT_like"/>
    <property type="match status" value="1"/>
</dbReference>
<dbReference type="Gene3D" id="3.90.550.10">
    <property type="entry name" value="Spore Coat Polysaccharide Biosynthesis Protein SpsA, Chain A"/>
    <property type="match status" value="1"/>
</dbReference>
<dbReference type="InterPro" id="IPR002495">
    <property type="entry name" value="Glyco_trans_8"/>
</dbReference>
<dbReference type="InterPro" id="IPR013645">
    <property type="entry name" value="Glyco_transf_8N"/>
</dbReference>
<dbReference type="InterPro" id="IPR050748">
    <property type="entry name" value="Glycosyltrans_8_dom-fam"/>
</dbReference>
<dbReference type="InterPro" id="IPR029044">
    <property type="entry name" value="Nucleotide-diphossugar_trans"/>
</dbReference>
<dbReference type="PANTHER" id="PTHR13778">
    <property type="entry name" value="GLYCOSYLTRANSFERASE 8 DOMAIN-CONTAINING PROTEIN"/>
    <property type="match status" value="1"/>
</dbReference>
<dbReference type="PANTHER" id="PTHR13778:SF64">
    <property type="entry name" value="LIPOPOLYSACCHARIDE 1,2-GLUCOSYLTRANSFERASE"/>
    <property type="match status" value="1"/>
</dbReference>
<dbReference type="Pfam" id="PF01501">
    <property type="entry name" value="Glyco_transf_8"/>
    <property type="match status" value="1"/>
</dbReference>
<dbReference type="Pfam" id="PF08437">
    <property type="entry name" value="Glyco_transf_8C"/>
    <property type="match status" value="1"/>
</dbReference>
<dbReference type="SUPFAM" id="SSF53448">
    <property type="entry name" value="Nucleotide-diphospho-sugar transferases"/>
    <property type="match status" value="1"/>
</dbReference>
<comment type="function">
    <text evidence="3 4">Glucosyltransferase involved in the biosynthesis of the core oligosaccharide region of lipopolysaccharide (LPS) (PubMed:17090541). Catalyzes the addition of a glucose (glucose II) to the outer-core galactose I (PubMed:17090541, PubMed:17631498). Has a marked preference for its specific donor substrate, but it appears to have a relaxed specificity for alternate LPS acceptor residues, providing the overall size of the acceptor is conserved (PubMed:17631498).</text>
</comment>
<comment type="catalytic activity">
    <reaction evidence="3 4">
        <text>UDP-glucose + [lipopolysaccharide] = UDP + D-glucosyl-[lipopolysaccharide].</text>
        <dbReference type="EC" id="2.4.1.58"/>
    </reaction>
</comment>
<comment type="cofactor">
    <cofactor evidence="2">
        <name>Mg(2+)</name>
        <dbReference type="ChEBI" id="CHEBI:18420"/>
    </cofactor>
</comment>
<comment type="biophysicochemical properties">
    <kinetics>
        <KM evidence="3">32 uM for UDP-glucose</KM>
        <text evidence="3">kcat is 28 min(-1).</text>
    </kinetics>
</comment>
<comment type="pathway">
    <text evidence="3">Bacterial outer membrane biogenesis; LPS core biosynthesis.</text>
</comment>
<comment type="subcellular location">
    <subcellularLocation>
        <location evidence="6">Cell inner membrane</location>
    </subcellularLocation>
    <text evidence="3">Membrane associated.</text>
</comment>
<comment type="domain">
    <text evidence="3">The C-terminal domain is important for catalytic activity and membrane association.</text>
</comment>
<comment type="disruption phenotype">
    <text evidence="3 4">Mutant lacks two hexose residues from the outer core oligosaccharide: the glucose residue added by WaaJ and an additional residue attached to it by WaaD (PubMed:17090541, PubMed:17631498). The side-chain GlcNAc is also missing (PubMed:17631498).</text>
</comment>
<comment type="miscellaneous">
    <text evidence="7 8">Strain F653 represents the enterobacterial R3 oligosaccharide core type.</text>
</comment>
<comment type="similarity">
    <text evidence="6">Belongs to the glycosyltransferase 8 family.</text>
</comment>
<protein>
    <recommendedName>
        <fullName evidence="6">Lipopolysaccharide 1,2-glucosyltransferase</fullName>
        <ecNumber evidence="3 4">2.4.1.58</ecNumber>
    </recommendedName>
    <alternativeName>
        <fullName evidence="5">UDP-glucose:(galactosyl) LPS alpha 1,2-glucosyltransferase</fullName>
    </alternativeName>
</protein>
<reference key="1">
    <citation type="journal article" date="1998" name="Mol. Microbiol.">
        <title>Molecular basis for structural diversity in the core regions of the lipopolysaccharides of Escherichia coli and Salmonella enterica.</title>
        <authorList>
            <person name="Heinrichs D.E."/>
            <person name="Yethon J.A."/>
            <person name="Whitfield C."/>
        </authorList>
    </citation>
    <scope>NUCLEOTIDE SEQUENCE [GENOMIC DNA]</scope>
    <scope>REVIEW</scope>
    <source>
        <strain>F653</strain>
    </source>
</reference>
<reference key="2">
    <citation type="journal article" date="2007" name="J. Biol. Chem.">
        <title>The C-terminal domain of the Escherichia coli WaaJ glycosyltransferase is important for catalytic activity and membrane association.</title>
        <authorList>
            <person name="Leipold M.D."/>
            <person name="Kaniuk N.A."/>
            <person name="Whitfield C."/>
        </authorList>
    </citation>
    <scope>FUNCTION</scope>
    <scope>CATALYTIC ACTIVITY</scope>
    <scope>BIOPHYSICOCHEMICAL PROPERTIES</scope>
    <scope>PATHWAY</scope>
    <scope>SUBCELLULAR LOCATION</scope>
    <scope>DOMAIN</scope>
    <scope>DISRUPTION PHENOTYPE</scope>
    <scope>MUTAGENESIS OF 319-HIS--LYS-338; 327-GLY--LYS-338; 329-CYS--LYS-338 AND 334-TYR--LYS-338</scope>
    <source>
        <strain>F653</strain>
    </source>
</reference>
<reference key="3">
    <citation type="journal article" date="2007" name="J. Biol. Chem.">
        <title>Glycosyltransferases involved in biosynthesis of the outer core region of Escherichia coli lipopolysaccharides exhibit broader substrate specificities than is predicted from lipopolysaccharide structures.</title>
        <authorList>
            <person name="Leipold M.D."/>
            <person name="Vinogradov E."/>
            <person name="Whitfield C."/>
        </authorList>
    </citation>
    <scope>FUNCTION</scope>
    <scope>CATALYTIC ACTIVITY</scope>
    <scope>DISRUPTION PHENOTYPE</scope>
    <source>
        <strain>F653</strain>
    </source>
</reference>
<evidence type="ECO:0000250" key="1">
    <source>
        <dbReference type="UniProtKB" id="A0A0H2URJ6"/>
    </source>
</evidence>
<evidence type="ECO:0000250" key="2">
    <source>
        <dbReference type="UniProtKB" id="P19816"/>
    </source>
</evidence>
<evidence type="ECO:0000269" key="3">
    <source>
    </source>
</evidence>
<evidence type="ECO:0000269" key="4">
    <source>
    </source>
</evidence>
<evidence type="ECO:0000303" key="5">
    <source>
    </source>
</evidence>
<evidence type="ECO:0000305" key="6"/>
<evidence type="ECO:0000305" key="7">
    <source>
    </source>
</evidence>
<evidence type="ECO:0000305" key="8">
    <source>
    </source>
</evidence>
<accession>Q9ZIT6</accession>
<proteinExistence type="evidence at protein level"/>
<sequence>MKLDFKHLTQFKDIIELDKRPVKLDERETFNVSWGIDENYQVGAAISIASILENNKQNKFTFHIIADYLDKEYIELLSQLATKYQTVIKLYLIDSEPLKALPQSNIWPVSIYYRLLSFDYFSARLDSLLYLDADIVCKGSLNELIALEFKDEYGAVVIDVDAMQSKSAERLCNEDFNGSYFNSGVMYINLREWLKQRLTEKFFDLLSDESIIKKLKYPDQDILNLMFLHHAKILPRKYNCIYTIKSEFEEKNSEYYTRFINDDTVFIHYTGITKPWHDWANYASADYFRNIYNISPWRNIPYKKAVKKHEHKEKYKHLLYQKKFLDGVFTAIKYNVMKG</sequence>
<gene>
    <name evidence="5" type="primary">waaJ</name>
</gene>
<organism>
    <name type="scientific">Escherichia coli</name>
    <dbReference type="NCBI Taxonomy" id="562"/>
    <lineage>
        <taxon>Bacteria</taxon>
        <taxon>Pseudomonadati</taxon>
        <taxon>Pseudomonadota</taxon>
        <taxon>Gammaproteobacteria</taxon>
        <taxon>Enterobacterales</taxon>
        <taxon>Enterobacteriaceae</taxon>
        <taxon>Escherichia</taxon>
    </lineage>
</organism>
<keyword id="KW-0997">Cell inner membrane</keyword>
<keyword id="KW-1003">Cell membrane</keyword>
<keyword id="KW-0328">Glycosyltransferase</keyword>
<keyword id="KW-0448">Lipopolysaccharide biosynthesis</keyword>
<keyword id="KW-0460">Magnesium</keyword>
<keyword id="KW-0472">Membrane</keyword>
<keyword id="KW-0479">Metal-binding</keyword>
<keyword id="KW-0808">Transferase</keyword>
<feature type="chain" id="PRO_0000459226" description="Lipopolysaccharide 1,2-glucosyltransferase">
    <location>
        <begin position="1"/>
        <end position="339"/>
    </location>
</feature>
<feature type="short sequence motif" description="DXD 1" evidence="6">
    <location>
        <begin position="132"/>
        <end position="134"/>
    </location>
</feature>
<feature type="short sequence motif" description="DXD 2" evidence="6">
    <location>
        <begin position="219"/>
        <end position="221"/>
    </location>
</feature>
<feature type="binding site" evidence="1">
    <location>
        <begin position="35"/>
        <end position="40"/>
    </location>
    <ligand>
        <name>UDP</name>
        <dbReference type="ChEBI" id="CHEBI:58223"/>
    </ligand>
</feature>
<feature type="binding site" evidence="1">
    <location>
        <begin position="132"/>
        <end position="133"/>
    </location>
    <ligand>
        <name>UDP</name>
        <dbReference type="ChEBI" id="CHEBI:58223"/>
    </ligand>
</feature>
<feature type="binding site" evidence="1">
    <location>
        <position position="132"/>
    </location>
    <ligand>
        <name>Mg(2+)</name>
        <dbReference type="ChEBI" id="CHEBI:18420"/>
    </ligand>
</feature>
<feature type="binding site" evidence="1">
    <location>
        <position position="134"/>
    </location>
    <ligand>
        <name>Mg(2+)</name>
        <dbReference type="ChEBI" id="CHEBI:18420"/>
    </ligand>
</feature>
<feature type="binding site" evidence="1">
    <location>
        <begin position="268"/>
        <end position="274"/>
    </location>
    <ligand>
        <name>UDP</name>
        <dbReference type="ChEBI" id="CHEBI:58223"/>
    </ligand>
</feature>
<feature type="binding site" evidence="1">
    <location>
        <position position="268"/>
    </location>
    <ligand>
        <name>Mg(2+)</name>
        <dbReference type="ChEBI" id="CHEBI:18420"/>
    </ligand>
</feature>
<feature type="mutagenesis site" description="Loss of activity in vivo and in vitro. Does not associate with the membrane fraction." evidence="3">
    <location>
        <begin position="319"/>
        <end position="338"/>
    </location>
</feature>
<feature type="mutagenesis site" description="294-fold decrease in catalytic efficiency." evidence="3">
    <location>
        <begin position="327"/>
        <end position="338"/>
    </location>
</feature>
<feature type="mutagenesis site" description="109-fold decrease in catalytic efficiency." evidence="3">
    <location>
        <begin position="329"/>
        <end position="338"/>
    </location>
</feature>
<feature type="mutagenesis site" description="18-fold decrease in catalytic efficiency." evidence="3">
    <location>
        <begin position="334"/>
        <end position="338"/>
    </location>
</feature>